<accession>P02444</accession>
<sequence>ACCARLCCSVPTSPATTICSSDKFCRCGVCLPSTCPHTVWLLQPTCCCDNRPPPYHVPQPSVPTCFLLNSSQPTPGLESINLTTYTQSSCEPCIPSCC</sequence>
<organism>
    <name type="scientific">Ovis aries</name>
    <name type="common">Sheep</name>
    <dbReference type="NCBI Taxonomy" id="9940"/>
    <lineage>
        <taxon>Eukaryota</taxon>
        <taxon>Metazoa</taxon>
        <taxon>Chordata</taxon>
        <taxon>Craniata</taxon>
        <taxon>Vertebrata</taxon>
        <taxon>Euteleostomi</taxon>
        <taxon>Mammalia</taxon>
        <taxon>Eutheria</taxon>
        <taxon>Laurasiatheria</taxon>
        <taxon>Artiodactyla</taxon>
        <taxon>Ruminantia</taxon>
        <taxon>Pecora</taxon>
        <taxon>Bovidae</taxon>
        <taxon>Caprinae</taxon>
        <taxon>Ovis</taxon>
    </lineage>
</organism>
<name>KRA33_SHEEP</name>
<keyword id="KW-0007">Acetylation</keyword>
<keyword id="KW-0903">Direct protein sequencing</keyword>
<keyword id="KW-0416">Keratin</keyword>
<keyword id="KW-1185">Reference proteome</keyword>
<evidence type="ECO:0000269" key="1">
    <source>
    </source>
</evidence>
<evidence type="ECO:0000305" key="2"/>
<dbReference type="PIR" id="A02842">
    <property type="entry name" value="KRSHH3"/>
</dbReference>
<dbReference type="STRING" id="9940.ENSOARP00000004807"/>
<dbReference type="iPTMnet" id="P02444"/>
<dbReference type="PaxDb" id="9940-ENSOARP00000004807"/>
<dbReference type="eggNOG" id="KOG4726">
    <property type="taxonomic scope" value="Eukaryota"/>
</dbReference>
<dbReference type="Proteomes" id="UP000002356">
    <property type="component" value="Unplaced"/>
</dbReference>
<dbReference type="GO" id="GO:0005829">
    <property type="term" value="C:cytosol"/>
    <property type="evidence" value="ECO:0007669"/>
    <property type="project" value="UniProtKB-ARBA"/>
</dbReference>
<dbReference type="GO" id="GO:0045095">
    <property type="term" value="C:keratin filament"/>
    <property type="evidence" value="ECO:0007669"/>
    <property type="project" value="InterPro"/>
</dbReference>
<dbReference type="GO" id="GO:0005198">
    <property type="term" value="F:structural molecule activity"/>
    <property type="evidence" value="ECO:0007669"/>
    <property type="project" value="InterPro"/>
</dbReference>
<dbReference type="InterPro" id="IPR007659">
    <property type="entry name" value="Keratin_matx"/>
</dbReference>
<dbReference type="PANTHER" id="PTHR23260">
    <property type="entry name" value="KERATIN ASSOCIATED PROTEIN 3-3-RELATED"/>
    <property type="match status" value="1"/>
</dbReference>
<dbReference type="PANTHER" id="PTHR23260:SF1">
    <property type="entry name" value="KERATIN-ASSOCIATED PROTEIN 3-3"/>
    <property type="match status" value="1"/>
</dbReference>
<dbReference type="Pfam" id="PF04579">
    <property type="entry name" value="Keratin_matx"/>
    <property type="match status" value="1"/>
</dbReference>
<proteinExistence type="evidence at protein level"/>
<reference key="1">
    <citation type="journal article" date="1971" name="Biochem. J.">
        <title>Studies on the high-sulphur proteins of reduced merino wool. Amino acid sequence of protein SCMKB-3B 3.</title>
        <authorList>
            <person name="Haylett T."/>
            <person name="Swart L.S."/>
            <person name="Parris D."/>
        </authorList>
    </citation>
    <scope>PROTEIN SEQUENCE</scope>
    <scope>ACETYLATION AT ALA-1</scope>
    <source>
        <strain>Merino</strain>
    </source>
</reference>
<feature type="chain" id="PRO_0000185168" description="Keratin, high sulfur matrix protein, IIIB3">
    <location>
        <begin position="1"/>
        <end position="98"/>
    </location>
</feature>
<feature type="modified residue" description="N-acetylalanine" evidence="1">
    <location>
        <position position="1"/>
    </location>
</feature>
<protein>
    <recommendedName>
        <fullName>Keratin, high sulfur matrix protein, IIIB3</fullName>
    </recommendedName>
</protein>
<comment type="function">
    <text>In the wool cortex, wool keratin intermediate filaments are embedded in an interfilamentous matrix, consisting of hair keratin-associated proteins (KRTAP), which are essential for the formation of a rigid and resistant wool shaft through their extensive disulfide bond cross-linking with abundant cysteine residues of wool keratins. The matrix proteins include the high-sulfur and high-glycine-tyrosine keratins.</text>
</comment>
<comment type="subunit">
    <text>Interacts with wool keratins.</text>
</comment>
<comment type="tissue specificity">
    <text>Wool.</text>
</comment>
<comment type="similarity">
    <text evidence="2">Belongs to the KRTAP type 3 family.</text>
</comment>